<proteinExistence type="inferred from homology"/>
<name>IML1_COCIM</name>
<accession>Q1E9Q9</accession>
<accession>J3KHP3</accession>
<reference key="1">
    <citation type="journal article" date="2009" name="Genome Res.">
        <title>Comparative genomic analyses of the human fungal pathogens Coccidioides and their relatives.</title>
        <authorList>
            <person name="Sharpton T.J."/>
            <person name="Stajich J.E."/>
            <person name="Rounsley S.D."/>
            <person name="Gardner M.J."/>
            <person name="Wortman J.R."/>
            <person name="Jordar V.S."/>
            <person name="Maiti R."/>
            <person name="Kodira C.D."/>
            <person name="Neafsey D.E."/>
            <person name="Zeng Q."/>
            <person name="Hung C.-Y."/>
            <person name="McMahan C."/>
            <person name="Muszewska A."/>
            <person name="Grynberg M."/>
            <person name="Mandel M.A."/>
            <person name="Kellner E.M."/>
            <person name="Barker B.M."/>
            <person name="Galgiani J.N."/>
            <person name="Orbach M.J."/>
            <person name="Kirkland T.N."/>
            <person name="Cole G.T."/>
            <person name="Henn M.R."/>
            <person name="Birren B.W."/>
            <person name="Taylor J.W."/>
        </authorList>
    </citation>
    <scope>NUCLEOTIDE SEQUENCE [LARGE SCALE GENOMIC DNA]</scope>
    <source>
        <strain>RS</strain>
    </source>
</reference>
<reference key="2">
    <citation type="journal article" date="2010" name="Genome Res.">
        <title>Population genomic sequencing of Coccidioides fungi reveals recent hybridization and transposon control.</title>
        <authorList>
            <person name="Neafsey D.E."/>
            <person name="Barker B.M."/>
            <person name="Sharpton T.J."/>
            <person name="Stajich J.E."/>
            <person name="Park D.J."/>
            <person name="Whiston E."/>
            <person name="Hung C.-Y."/>
            <person name="McMahan C."/>
            <person name="White J."/>
            <person name="Sykes S."/>
            <person name="Heiman D."/>
            <person name="Young S."/>
            <person name="Zeng Q."/>
            <person name="Abouelleil A."/>
            <person name="Aftuck L."/>
            <person name="Bessette D."/>
            <person name="Brown A."/>
            <person name="FitzGerald M."/>
            <person name="Lui A."/>
            <person name="Macdonald J.P."/>
            <person name="Priest M."/>
            <person name="Orbach M.J."/>
            <person name="Galgiani J.N."/>
            <person name="Kirkland T.N."/>
            <person name="Cole G.T."/>
            <person name="Birren B.W."/>
            <person name="Henn M.R."/>
            <person name="Taylor J.W."/>
            <person name="Rounsley S.D."/>
        </authorList>
    </citation>
    <scope>GENOME REANNOTATION</scope>
    <source>
        <strain>RS</strain>
    </source>
</reference>
<gene>
    <name type="primary">IML1</name>
    <name type="ORF">CIMG_00704</name>
</gene>
<dbReference type="EMBL" id="GG704911">
    <property type="protein sequence ID" value="EAS35350.3"/>
    <property type="molecule type" value="Genomic_DNA"/>
</dbReference>
<dbReference type="RefSeq" id="XP_001246933.2">
    <property type="nucleotide sequence ID" value="XM_001246932.2"/>
</dbReference>
<dbReference type="FunCoup" id="Q1E9Q9">
    <property type="interactions" value="619"/>
</dbReference>
<dbReference type="STRING" id="246410.Q1E9Q9"/>
<dbReference type="GeneID" id="4565744"/>
<dbReference type="KEGG" id="cim:CIMG_00704"/>
<dbReference type="VEuPathDB" id="FungiDB:CIMG_00704"/>
<dbReference type="InParanoid" id="Q1E9Q9"/>
<dbReference type="OMA" id="SWMNATP"/>
<dbReference type="OrthoDB" id="39497at2759"/>
<dbReference type="Proteomes" id="UP000001261">
    <property type="component" value="Unassembled WGS sequence"/>
</dbReference>
<dbReference type="GO" id="GO:1990130">
    <property type="term" value="C:GATOR1 complex"/>
    <property type="evidence" value="ECO:0007669"/>
    <property type="project" value="TreeGrafter"/>
</dbReference>
<dbReference type="GO" id="GO:0005774">
    <property type="term" value="C:vacuolar membrane"/>
    <property type="evidence" value="ECO:0007669"/>
    <property type="project" value="UniProtKB-SubCell"/>
</dbReference>
<dbReference type="GO" id="GO:0005096">
    <property type="term" value="F:GTPase activator activity"/>
    <property type="evidence" value="ECO:0007669"/>
    <property type="project" value="InterPro"/>
</dbReference>
<dbReference type="GO" id="GO:0035556">
    <property type="term" value="P:intracellular signal transduction"/>
    <property type="evidence" value="ECO:0007669"/>
    <property type="project" value="InterPro"/>
</dbReference>
<dbReference type="GO" id="GO:1904262">
    <property type="term" value="P:negative regulation of TORC1 signaling"/>
    <property type="evidence" value="ECO:0007669"/>
    <property type="project" value="TreeGrafter"/>
</dbReference>
<dbReference type="GO" id="GO:0010508">
    <property type="term" value="P:positive regulation of autophagy"/>
    <property type="evidence" value="ECO:0007669"/>
    <property type="project" value="TreeGrafter"/>
</dbReference>
<dbReference type="CDD" id="cd04449">
    <property type="entry name" value="DEP_DEPDC5-like"/>
    <property type="match status" value="1"/>
</dbReference>
<dbReference type="Gene3D" id="1.10.10.10">
    <property type="entry name" value="Winged helix-like DNA-binding domain superfamily/Winged helix DNA-binding domain"/>
    <property type="match status" value="1"/>
</dbReference>
<dbReference type="InterPro" id="IPR000591">
    <property type="entry name" value="DEP_dom"/>
</dbReference>
<dbReference type="InterPro" id="IPR045838">
    <property type="entry name" value="DEPDC5_CTD"/>
</dbReference>
<dbReference type="InterPro" id="IPR027244">
    <property type="entry name" value="IML1"/>
</dbReference>
<dbReference type="InterPro" id="IPR048255">
    <property type="entry name" value="IML1_N"/>
</dbReference>
<dbReference type="InterPro" id="IPR036388">
    <property type="entry name" value="WH-like_DNA-bd_sf"/>
</dbReference>
<dbReference type="InterPro" id="IPR036390">
    <property type="entry name" value="WH_DNA-bd_sf"/>
</dbReference>
<dbReference type="PANTHER" id="PTHR13179">
    <property type="entry name" value="DEP DOMAIN CONTAINING PROTEIN 5"/>
    <property type="match status" value="1"/>
</dbReference>
<dbReference type="PANTHER" id="PTHR13179:SF8">
    <property type="entry name" value="GATOR COMPLEX PROTEIN DEPDC5"/>
    <property type="match status" value="1"/>
</dbReference>
<dbReference type="Pfam" id="PF00610">
    <property type="entry name" value="DEP"/>
    <property type="match status" value="1"/>
</dbReference>
<dbReference type="Pfam" id="PF19418">
    <property type="entry name" value="DEPDC5_CTD"/>
    <property type="match status" value="1"/>
</dbReference>
<dbReference type="Pfam" id="PF12257">
    <property type="entry name" value="IML1"/>
    <property type="match status" value="1"/>
</dbReference>
<dbReference type="Pfam" id="PF24438">
    <property type="entry name" value="IML1_N_fung"/>
    <property type="match status" value="1"/>
</dbReference>
<dbReference type="SMART" id="SM00049">
    <property type="entry name" value="DEP"/>
    <property type="match status" value="1"/>
</dbReference>
<dbReference type="SUPFAM" id="SSF46785">
    <property type="entry name" value="Winged helix' DNA-binding domain"/>
    <property type="match status" value="1"/>
</dbReference>
<dbReference type="PROSITE" id="PS50186">
    <property type="entry name" value="DEP"/>
    <property type="match status" value="1"/>
</dbReference>
<organism>
    <name type="scientific">Coccidioides immitis (strain RS)</name>
    <name type="common">Valley fever fungus</name>
    <dbReference type="NCBI Taxonomy" id="246410"/>
    <lineage>
        <taxon>Eukaryota</taxon>
        <taxon>Fungi</taxon>
        <taxon>Dikarya</taxon>
        <taxon>Ascomycota</taxon>
        <taxon>Pezizomycotina</taxon>
        <taxon>Eurotiomycetes</taxon>
        <taxon>Eurotiomycetidae</taxon>
        <taxon>Onygenales</taxon>
        <taxon>Onygenaceae</taxon>
        <taxon>Coccidioides</taxon>
    </lineage>
</organism>
<sequence>MLQSGGIKGPQRKQFQPASAEARSMRATIASLQDSKVDSARPDSPQYSPKSPSKRSCTLWVHDETFSREEVLCNLQALPDFGLNVGYLVEVSVAQGDHLGSQLKPEAGSRYLQDEGSFTSPRWPIGAGGSASRSTFGGDAKLRSRKTPGKFLFIVKPFPPEVRAKHPNLQVSVANHVANAFGFKNRSQIHLTVRKRAQCSASHVELIFRDQFLLRSDMWRLTMSELVDRPIYKGQKILFMGSIKATVKSVYISGNKTLSAYFSPNTIPIFRSESARFVLFIQMSKEMWDFDSEGTGDILFSRVINSLMPELFKRWANIDAHHLVTIVLFTRVQYDFATPTSGPATLNSSFLNRGPDGSAPKTQDFYRVVVNDMPSGQWTTILDSLKKEFRTFLRDVSIPPPYFPDTPIAAEDIPRFTESHPPKIAGRPTSALRGNILEAIHVASSYLAFEHIGRDLVRTGTSIVIITPGTGVFEVPFKILSLTSDVLTSRAIGIDLICLSPMPLHSVPLFKYKLPRDTSCRPGSSISSRLAPYEHRRMSATFSTAHMSPLDRPGTALSDQALQGIGSSPQEEEWGYGIPHWVDISYWDPKLDRASRAAAKKKTTMSPVIATIAKNSQLFVPKVRMYEIQMMGVMESEQSNISIPHMSSTSSRTQKRPGTLASLAASIGNSPSPDSSYRSQAGDGFRPKSFMYNIKDSKKSMLPPDAKERTNLVEWMDSYDQSIFHLHPKQKRPRRRSKAKQAAETETSRPSQHETPKLRSSMDLGQPDNRHLSPFGQPHLQLRYERIEEESLVTPRRITQPPTQTNMKSIMKPKPKLPIPRISRSISFALRGLGSAPPRAHASTEVKTEHAQALPTSGGRTPEDPASEASNTVTPRQNSPLNSGAATPKPERSEADAPSNVEAMTPSKPILIRAIRRTGEDGSVEPLPLEGSFSTQGTEPRHDLLQHHDSQGAFPVKRTGRRLDLLSSGDPTSPPTVSATDALSPWVSPINPWNPPKLAPSRSSWYGRWQHVYPRIPKTTSVKWKSLKSPASLPITAEELPTESELTSNFLQTPYRVYQNDEADAEVPKTREMLLRDMISLRLSHGFQIVVGKKVEEQSTGYSNIFDTNALSKDGTTVFMARGNVIHRLVCVEGEIEVTKFTRRPLNGFPTDELNDASISYSPAVKTILSAQYCKNTISLGAPPEEYNWNSADAFLAGHRDHITNSIRQLRFWRTRFVLIPVQVPLAARRHISSFHEDNEEEIHLLGIYKLTQMWQRHRYIPPEERQFQSAARKSKDQNPLNIIYQTSDPSVVVAAELDRLLLEDPGLDNAPAQLLPDSELLQRYNITLAFLAQKIQGEKGVRMMDRRWHWRLHYNCFVGMEFTTWLLQNFRDIDTREEAVEFGNDLMTHGLFHHVQRRHNFRDGNYFYQIADEYRVVRPESRGGWFQPRKVDKSNPNTPMGEAMKDSASSIRARAEKSIDETGSKLDIPGSSKPSRPKPSISLAKSLKYDVDPRKRSDRPEVIDLHYDRIHNPENCFHIELSWMNATPKLVEDAIMSWVGTAEKYGLKLVELPISEASSIVERQVFRRPYPIKLKVDPPPTPVSTYLTATSFTSQAVPDHHFYQKAILKKFDFVLDFEAKSAFPANVDVCYSWGKPDYQFPQYVHRTGAVLAQITDEGHFLLLANRFHNSHNPVSLKDSNKFDRSSEYFPRPRAATFDPLDRRSPLLSPVARPTPGTDSSIPSASPPYISASDASQNSYRVTDQIKDSMRAFCSDAEQLEAFFAEMAMAKGKTATTAGPASLSSVKLSPTTPATVDSSIPSLELPASVVARNLHLPQPVALAAAQASAETPQVAGSIDAVMRSTSVSSPRNGAFRH</sequence>
<protein>
    <recommendedName>
        <fullName>Vacuolar membrane-associated protein IML1</fullName>
    </recommendedName>
</protein>
<keyword id="KW-0472">Membrane</keyword>
<keyword id="KW-1185">Reference proteome</keyword>
<keyword id="KW-0926">Vacuole</keyword>
<evidence type="ECO:0000250" key="1"/>
<evidence type="ECO:0000255" key="2">
    <source>
        <dbReference type="PROSITE-ProRule" id="PRU00066"/>
    </source>
</evidence>
<evidence type="ECO:0000256" key="3">
    <source>
        <dbReference type="SAM" id="MobiDB-lite"/>
    </source>
</evidence>
<evidence type="ECO:0000305" key="4"/>
<feature type="chain" id="PRO_0000301769" description="Vacuolar membrane-associated protein IML1">
    <location>
        <begin position="1"/>
        <end position="1857"/>
    </location>
</feature>
<feature type="domain" description="DEP" evidence="2">
    <location>
        <begin position="1338"/>
        <end position="1413"/>
    </location>
</feature>
<feature type="region of interest" description="Disordered" evidence="3">
    <location>
        <begin position="1"/>
        <end position="55"/>
    </location>
</feature>
<feature type="region of interest" description="Disordered" evidence="3">
    <location>
        <begin position="639"/>
        <end position="690"/>
    </location>
</feature>
<feature type="region of interest" description="Disordered" evidence="3">
    <location>
        <begin position="724"/>
        <end position="777"/>
    </location>
</feature>
<feature type="region of interest" description="Disordered" evidence="3">
    <location>
        <begin position="799"/>
        <end position="818"/>
    </location>
</feature>
<feature type="region of interest" description="Disordered" evidence="3">
    <location>
        <begin position="833"/>
        <end position="943"/>
    </location>
</feature>
<feature type="region of interest" description="Disordered" evidence="3">
    <location>
        <begin position="1426"/>
        <end position="1496"/>
    </location>
</feature>
<feature type="region of interest" description="Disordered" evidence="3">
    <location>
        <begin position="1711"/>
        <end position="1730"/>
    </location>
</feature>
<feature type="compositionally biased region" description="Polar residues" evidence="3">
    <location>
        <begin position="45"/>
        <end position="55"/>
    </location>
</feature>
<feature type="compositionally biased region" description="Polar residues" evidence="3">
    <location>
        <begin position="639"/>
        <end position="652"/>
    </location>
</feature>
<feature type="compositionally biased region" description="Polar residues" evidence="3">
    <location>
        <begin position="667"/>
        <end position="679"/>
    </location>
</feature>
<feature type="compositionally biased region" description="Basic residues" evidence="3">
    <location>
        <begin position="726"/>
        <end position="739"/>
    </location>
</feature>
<feature type="compositionally biased region" description="Basic and acidic residues" evidence="3">
    <location>
        <begin position="741"/>
        <end position="757"/>
    </location>
</feature>
<feature type="compositionally biased region" description="Polar residues" evidence="3">
    <location>
        <begin position="868"/>
        <end position="885"/>
    </location>
</feature>
<feature type="compositionally biased region" description="Basic and acidic residues" evidence="3">
    <location>
        <begin position="1454"/>
        <end position="1465"/>
    </location>
</feature>
<feature type="compositionally biased region" description="Low complexity" evidence="3">
    <location>
        <begin position="1469"/>
        <end position="1483"/>
    </location>
</feature>
<feature type="compositionally biased region" description="Low complexity" evidence="3">
    <location>
        <begin position="1719"/>
        <end position="1730"/>
    </location>
</feature>
<comment type="subcellular location">
    <subcellularLocation>
        <location evidence="1">Vacuole membrane</location>
        <topology evidence="1">Peripheral membrane protein</topology>
    </subcellularLocation>
</comment>
<comment type="similarity">
    <text evidence="4">Belongs to the IML1 family.</text>
</comment>